<dbReference type="EMBL" id="CP000036">
    <property type="protein sequence ID" value="ABB65205.1"/>
    <property type="molecule type" value="Genomic_DNA"/>
</dbReference>
<dbReference type="RefSeq" id="WP_001269672.1">
    <property type="nucleotide sequence ID" value="NC_007613.1"/>
</dbReference>
<dbReference type="SMR" id="Q324Q3"/>
<dbReference type="KEGG" id="sbo:SBO_0505"/>
<dbReference type="HOGENOM" id="CLU_103309_1_1_6"/>
<dbReference type="Proteomes" id="UP000007067">
    <property type="component" value="Chromosome"/>
</dbReference>
<dbReference type="GO" id="GO:0009279">
    <property type="term" value="C:cell outer membrane"/>
    <property type="evidence" value="ECO:0007669"/>
    <property type="project" value="UniProtKB-SubCell"/>
</dbReference>
<dbReference type="GO" id="GO:1990351">
    <property type="term" value="C:transporter complex"/>
    <property type="evidence" value="ECO:0007669"/>
    <property type="project" value="TreeGrafter"/>
</dbReference>
<dbReference type="GO" id="GO:0001530">
    <property type="term" value="F:lipopolysaccharide binding"/>
    <property type="evidence" value="ECO:0007669"/>
    <property type="project" value="TreeGrafter"/>
</dbReference>
<dbReference type="GO" id="GO:0043165">
    <property type="term" value="P:Gram-negative-bacterium-type cell outer membrane assembly"/>
    <property type="evidence" value="ECO:0007669"/>
    <property type="project" value="UniProtKB-UniRule"/>
</dbReference>
<dbReference type="GO" id="GO:0015920">
    <property type="term" value="P:lipopolysaccharide transport"/>
    <property type="evidence" value="ECO:0007669"/>
    <property type="project" value="TreeGrafter"/>
</dbReference>
<dbReference type="FunFam" id="3.30.160.150:FF:000001">
    <property type="entry name" value="LPS-assembly lipoprotein LptE"/>
    <property type="match status" value="1"/>
</dbReference>
<dbReference type="Gene3D" id="3.30.160.150">
    <property type="entry name" value="Lipoprotein like domain"/>
    <property type="match status" value="1"/>
</dbReference>
<dbReference type="HAMAP" id="MF_01186">
    <property type="entry name" value="LPS_assembly_LptE"/>
    <property type="match status" value="1"/>
</dbReference>
<dbReference type="InterPro" id="IPR007485">
    <property type="entry name" value="LPS_assembly_LptE"/>
</dbReference>
<dbReference type="NCBIfam" id="NF008062">
    <property type="entry name" value="PRK10796.1"/>
    <property type="match status" value="1"/>
</dbReference>
<dbReference type="PANTHER" id="PTHR38098">
    <property type="entry name" value="LPS-ASSEMBLY LIPOPROTEIN LPTE"/>
    <property type="match status" value="1"/>
</dbReference>
<dbReference type="PANTHER" id="PTHR38098:SF1">
    <property type="entry name" value="LPS-ASSEMBLY LIPOPROTEIN LPTE"/>
    <property type="match status" value="1"/>
</dbReference>
<dbReference type="Pfam" id="PF04390">
    <property type="entry name" value="LptE"/>
    <property type="match status" value="1"/>
</dbReference>
<dbReference type="PROSITE" id="PS51257">
    <property type="entry name" value="PROKAR_LIPOPROTEIN"/>
    <property type="match status" value="1"/>
</dbReference>
<reference key="1">
    <citation type="journal article" date="2005" name="Nucleic Acids Res.">
        <title>Genome dynamics and diversity of Shigella species, the etiologic agents of bacillary dysentery.</title>
        <authorList>
            <person name="Yang F."/>
            <person name="Yang J."/>
            <person name="Zhang X."/>
            <person name="Chen L."/>
            <person name="Jiang Y."/>
            <person name="Yan Y."/>
            <person name="Tang X."/>
            <person name="Wang J."/>
            <person name="Xiong Z."/>
            <person name="Dong J."/>
            <person name="Xue Y."/>
            <person name="Zhu Y."/>
            <person name="Xu X."/>
            <person name="Sun L."/>
            <person name="Chen S."/>
            <person name="Nie H."/>
            <person name="Peng J."/>
            <person name="Xu J."/>
            <person name="Wang Y."/>
            <person name="Yuan Z."/>
            <person name="Wen Y."/>
            <person name="Yao Z."/>
            <person name="Shen Y."/>
            <person name="Qiang B."/>
            <person name="Hou Y."/>
            <person name="Yu J."/>
            <person name="Jin Q."/>
        </authorList>
    </citation>
    <scope>NUCLEOTIDE SEQUENCE [LARGE SCALE GENOMIC DNA]</scope>
    <source>
        <strain>Sb227</strain>
    </source>
</reference>
<gene>
    <name evidence="1" type="primary">lptE</name>
    <name type="synonym">rlpB</name>
    <name type="ordered locus">SBO_0505</name>
</gene>
<comment type="function">
    <text evidence="1">Together with LptD, is involved in the assembly of lipopolysaccharide (LPS) at the surface of the outer membrane. Required for the proper assembly of LptD. Binds LPS and may serve as the LPS recognition site at the outer membrane.</text>
</comment>
<comment type="subunit">
    <text evidence="1">Component of the lipopolysaccharide transport and assembly complex. Interacts with LptD.</text>
</comment>
<comment type="subcellular location">
    <subcellularLocation>
        <location evidence="1">Cell outer membrane</location>
        <topology evidence="1">Lipid-anchor</topology>
    </subcellularLocation>
</comment>
<comment type="similarity">
    <text evidence="1">Belongs to the LptE lipoprotein family.</text>
</comment>
<organism>
    <name type="scientific">Shigella boydii serotype 4 (strain Sb227)</name>
    <dbReference type="NCBI Taxonomy" id="300268"/>
    <lineage>
        <taxon>Bacteria</taxon>
        <taxon>Pseudomonadati</taxon>
        <taxon>Pseudomonadota</taxon>
        <taxon>Gammaproteobacteria</taxon>
        <taxon>Enterobacterales</taxon>
        <taxon>Enterobacteriaceae</taxon>
        <taxon>Shigella</taxon>
    </lineage>
</organism>
<keyword id="KW-0998">Cell outer membrane</keyword>
<keyword id="KW-0449">Lipoprotein</keyword>
<keyword id="KW-0472">Membrane</keyword>
<keyword id="KW-0564">Palmitate</keyword>
<keyword id="KW-0732">Signal</keyword>
<protein>
    <recommendedName>
        <fullName evidence="1">LPS-assembly lipoprotein LptE</fullName>
    </recommendedName>
</protein>
<feature type="signal peptide" evidence="1">
    <location>
        <begin position="1"/>
        <end position="18"/>
    </location>
</feature>
<feature type="chain" id="PRO_0000281185" description="LPS-assembly lipoprotein LptE">
    <location>
        <begin position="19"/>
        <end position="193"/>
    </location>
</feature>
<feature type="region of interest" description="Disordered" evidence="2">
    <location>
        <begin position="166"/>
        <end position="193"/>
    </location>
</feature>
<feature type="compositionally biased region" description="Low complexity" evidence="2">
    <location>
        <begin position="174"/>
        <end position="186"/>
    </location>
</feature>
<feature type="lipid moiety-binding region" description="N-palmitoyl cysteine" evidence="1">
    <location>
        <position position="19"/>
    </location>
</feature>
<feature type="lipid moiety-binding region" description="S-diacylglycerol cysteine" evidence="1">
    <location>
        <position position="19"/>
    </location>
</feature>
<name>LPTE_SHIBS</name>
<evidence type="ECO:0000255" key="1">
    <source>
        <dbReference type="HAMAP-Rule" id="MF_01186"/>
    </source>
</evidence>
<evidence type="ECO:0000256" key="2">
    <source>
        <dbReference type="SAM" id="MobiDB-lite"/>
    </source>
</evidence>
<accession>Q324Q3</accession>
<proteinExistence type="inferred from homology"/>
<sequence>MRYLATLLLSLAVLITAGCGWHLRDTTQVPSTMKVMILDSGDPNGPLSRAVRNQLRLNGVELLDKETTRKDVPSLRLGKVSIAKDTASVFRNGQTAEYQMIMTVNATVLIPGRDIYPISAKVFRSFFDNPQMALAKDNEQDMIVKEMYDRAAEQLIRKLPSIRAADIRSDEEQTSTTTDTPATPARVSTMLGN</sequence>